<accession>Q6FCG1</accession>
<comment type="function">
    <text evidence="1">Modulates RecA activity.</text>
</comment>
<comment type="subcellular location">
    <subcellularLocation>
        <location evidence="1">Cytoplasm</location>
    </subcellularLocation>
</comment>
<comment type="similarity">
    <text evidence="1">Belongs to the RecX family.</text>
</comment>
<sequence length="159" mass="18556">MIFKHTQTSRAELSGTKLRSLAFALLTRKEYSKSELIEKLKLYAVDENEVIQLVDELSDQHYQSDQRVAELVLSSQLRKGKGPNRIKQALKNKELDTALINDEIQDIDWLEQAYQLKVKKFGTDVETDAKLKAKQIRFLQYRGFDMDIIMKAIHRIEEE</sequence>
<reference key="1">
    <citation type="journal article" date="2004" name="Nucleic Acids Res.">
        <title>Unique features revealed by the genome sequence of Acinetobacter sp. ADP1, a versatile and naturally transformation competent bacterium.</title>
        <authorList>
            <person name="Barbe V."/>
            <person name="Vallenet D."/>
            <person name="Fonknechten N."/>
            <person name="Kreimeyer A."/>
            <person name="Oztas S."/>
            <person name="Labarre L."/>
            <person name="Cruveiller S."/>
            <person name="Robert C."/>
            <person name="Duprat S."/>
            <person name="Wincker P."/>
            <person name="Ornston L.N."/>
            <person name="Weissenbach J."/>
            <person name="Marliere P."/>
            <person name="Cohen G.N."/>
            <person name="Medigue C."/>
        </authorList>
    </citation>
    <scope>NUCLEOTIDE SEQUENCE [LARGE SCALE GENOMIC DNA]</scope>
    <source>
        <strain>ATCC 33305 / BD413 / ADP1</strain>
    </source>
</reference>
<evidence type="ECO:0000255" key="1">
    <source>
        <dbReference type="HAMAP-Rule" id="MF_01114"/>
    </source>
</evidence>
<feature type="chain" id="PRO_0000162410" description="Regulatory protein RecX">
    <location>
        <begin position="1"/>
        <end position="159"/>
    </location>
</feature>
<gene>
    <name evidence="1" type="primary">recX</name>
    <name type="ordered locus">ACIAD1384</name>
</gene>
<protein>
    <recommendedName>
        <fullName evidence="1">Regulatory protein RecX</fullName>
    </recommendedName>
</protein>
<name>RECX_ACIAD</name>
<keyword id="KW-0963">Cytoplasm</keyword>
<dbReference type="EMBL" id="CR543861">
    <property type="protein sequence ID" value="CAG68250.1"/>
    <property type="molecule type" value="Genomic_DNA"/>
</dbReference>
<dbReference type="SMR" id="Q6FCG1"/>
<dbReference type="STRING" id="202950.GCA_001485005_01141"/>
<dbReference type="KEGG" id="aci:ACIAD1384"/>
<dbReference type="eggNOG" id="COG2137">
    <property type="taxonomic scope" value="Bacteria"/>
</dbReference>
<dbReference type="HOGENOM" id="CLU_066607_3_2_6"/>
<dbReference type="OrthoDB" id="7066780at2"/>
<dbReference type="BioCyc" id="ASP62977:ACIAD_RS06385-MONOMER"/>
<dbReference type="Proteomes" id="UP000000430">
    <property type="component" value="Chromosome"/>
</dbReference>
<dbReference type="GO" id="GO:0005737">
    <property type="term" value="C:cytoplasm"/>
    <property type="evidence" value="ECO:0007669"/>
    <property type="project" value="UniProtKB-SubCell"/>
</dbReference>
<dbReference type="GO" id="GO:0006282">
    <property type="term" value="P:regulation of DNA repair"/>
    <property type="evidence" value="ECO:0007669"/>
    <property type="project" value="UniProtKB-UniRule"/>
</dbReference>
<dbReference type="Gene3D" id="1.10.10.10">
    <property type="entry name" value="Winged helix-like DNA-binding domain superfamily/Winged helix DNA-binding domain"/>
    <property type="match status" value="3"/>
</dbReference>
<dbReference type="HAMAP" id="MF_01114">
    <property type="entry name" value="RecX"/>
    <property type="match status" value="1"/>
</dbReference>
<dbReference type="InterPro" id="IPR053924">
    <property type="entry name" value="RecX_HTH_2nd"/>
</dbReference>
<dbReference type="InterPro" id="IPR053925">
    <property type="entry name" value="RecX_HTH_3rd"/>
</dbReference>
<dbReference type="InterPro" id="IPR003783">
    <property type="entry name" value="Regulatory_RecX"/>
</dbReference>
<dbReference type="InterPro" id="IPR036388">
    <property type="entry name" value="WH-like_DNA-bd_sf"/>
</dbReference>
<dbReference type="PANTHER" id="PTHR33602">
    <property type="entry name" value="REGULATORY PROTEIN RECX FAMILY PROTEIN"/>
    <property type="match status" value="1"/>
</dbReference>
<dbReference type="PANTHER" id="PTHR33602:SF1">
    <property type="entry name" value="REGULATORY PROTEIN RECX FAMILY PROTEIN"/>
    <property type="match status" value="1"/>
</dbReference>
<dbReference type="Pfam" id="PF02631">
    <property type="entry name" value="RecX_HTH2"/>
    <property type="match status" value="1"/>
</dbReference>
<dbReference type="Pfam" id="PF21981">
    <property type="entry name" value="RecX_HTH3"/>
    <property type="match status" value="1"/>
</dbReference>
<organism>
    <name type="scientific">Acinetobacter baylyi (strain ATCC 33305 / BD413 / ADP1)</name>
    <dbReference type="NCBI Taxonomy" id="62977"/>
    <lineage>
        <taxon>Bacteria</taxon>
        <taxon>Pseudomonadati</taxon>
        <taxon>Pseudomonadota</taxon>
        <taxon>Gammaproteobacteria</taxon>
        <taxon>Moraxellales</taxon>
        <taxon>Moraxellaceae</taxon>
        <taxon>Acinetobacter</taxon>
    </lineage>
</organism>
<proteinExistence type="inferred from homology"/>